<sequence>MNVSIEQKYQALLNIVPFVSHETMNDLIQFESLILQWNAHINLISAATIPVLWIRHILDSAQIYPLHSNFLHWCDLGSGGGFPAIVIAIFLKTKKAGHIDLVESNGKKIAFLRTVISQLNLPATVHHCRIEDVYQKIKKPDVITARGLACLDELLQLIFPLLTQKTIALLQKGRDYAIEITNASANWQFDLLKHKSKIDKNSVILEISHVRSCRG</sequence>
<comment type="function">
    <text evidence="1">Specifically methylates the N7 position of guanine in position 527 of 16S rRNA.</text>
</comment>
<comment type="catalytic activity">
    <reaction evidence="1">
        <text>guanosine(527) in 16S rRNA + S-adenosyl-L-methionine = N(7)-methylguanosine(527) in 16S rRNA + S-adenosyl-L-homocysteine</text>
        <dbReference type="Rhea" id="RHEA:42732"/>
        <dbReference type="Rhea" id="RHEA-COMP:10209"/>
        <dbReference type="Rhea" id="RHEA-COMP:10210"/>
        <dbReference type="ChEBI" id="CHEBI:57856"/>
        <dbReference type="ChEBI" id="CHEBI:59789"/>
        <dbReference type="ChEBI" id="CHEBI:74269"/>
        <dbReference type="ChEBI" id="CHEBI:74480"/>
        <dbReference type="EC" id="2.1.1.170"/>
    </reaction>
</comment>
<comment type="subcellular location">
    <subcellularLocation>
        <location evidence="1">Cytoplasm</location>
    </subcellularLocation>
</comment>
<comment type="similarity">
    <text evidence="1">Belongs to the methyltransferase superfamily. RNA methyltransferase RsmG family.</text>
</comment>
<keyword id="KW-0963">Cytoplasm</keyword>
<keyword id="KW-0489">Methyltransferase</keyword>
<keyword id="KW-0698">rRNA processing</keyword>
<keyword id="KW-0949">S-adenosyl-L-methionine</keyword>
<keyword id="KW-0808">Transferase</keyword>
<reference key="1">
    <citation type="journal article" date="2004" name="Proc. Natl. Acad. Sci. U.S.A.">
        <title>The louse-borne human pathogen Bartonella quintana is a genomic derivative of the zoonotic agent Bartonella henselae.</title>
        <authorList>
            <person name="Alsmark U.C.M."/>
            <person name="Frank A.C."/>
            <person name="Karlberg E.O."/>
            <person name="Legault B.-A."/>
            <person name="Ardell D.H."/>
            <person name="Canbaeck B."/>
            <person name="Eriksson A.-S."/>
            <person name="Naeslund A.K."/>
            <person name="Handley S.A."/>
            <person name="Huvet M."/>
            <person name="La Scola B."/>
            <person name="Holmberg M."/>
            <person name="Andersson S.G.E."/>
        </authorList>
    </citation>
    <scope>NUCLEOTIDE SEQUENCE [LARGE SCALE GENOMIC DNA]</scope>
    <source>
        <strain>Toulouse</strain>
    </source>
</reference>
<feature type="chain" id="PRO_0000184219" description="Ribosomal RNA small subunit methyltransferase G">
    <location>
        <begin position="1"/>
        <end position="215"/>
    </location>
</feature>
<feature type="binding site" evidence="1">
    <location>
        <position position="77"/>
    </location>
    <ligand>
        <name>S-adenosyl-L-methionine</name>
        <dbReference type="ChEBI" id="CHEBI:59789"/>
    </ligand>
</feature>
<feature type="binding site" evidence="1">
    <location>
        <position position="82"/>
    </location>
    <ligand>
        <name>S-adenosyl-L-methionine</name>
        <dbReference type="ChEBI" id="CHEBI:59789"/>
    </ligand>
</feature>
<feature type="binding site" evidence="1">
    <location>
        <begin position="130"/>
        <end position="131"/>
    </location>
    <ligand>
        <name>S-adenosyl-L-methionine</name>
        <dbReference type="ChEBI" id="CHEBI:59789"/>
    </ligand>
</feature>
<feature type="binding site" evidence="1">
    <location>
        <position position="146"/>
    </location>
    <ligand>
        <name>S-adenosyl-L-methionine</name>
        <dbReference type="ChEBI" id="CHEBI:59789"/>
    </ligand>
</feature>
<evidence type="ECO:0000255" key="1">
    <source>
        <dbReference type="HAMAP-Rule" id="MF_00074"/>
    </source>
</evidence>
<gene>
    <name evidence="1" type="primary">rsmG</name>
    <name type="ordered locus">BQ13550</name>
</gene>
<name>RSMG_BARQU</name>
<dbReference type="EC" id="2.1.1.170" evidence="1"/>
<dbReference type="EMBL" id="BX897700">
    <property type="protein sequence ID" value="CAF26813.1"/>
    <property type="molecule type" value="Genomic_DNA"/>
</dbReference>
<dbReference type="RefSeq" id="WP_011179967.1">
    <property type="nucleotide sequence ID" value="NC_005955.1"/>
</dbReference>
<dbReference type="SMR" id="Q6FYC0"/>
<dbReference type="KEGG" id="bqu:BQ13550"/>
<dbReference type="eggNOG" id="COG0357">
    <property type="taxonomic scope" value="Bacteria"/>
</dbReference>
<dbReference type="HOGENOM" id="CLU_065341_1_1_5"/>
<dbReference type="OrthoDB" id="9808773at2"/>
<dbReference type="Proteomes" id="UP000000597">
    <property type="component" value="Chromosome"/>
</dbReference>
<dbReference type="GO" id="GO:0005829">
    <property type="term" value="C:cytosol"/>
    <property type="evidence" value="ECO:0007669"/>
    <property type="project" value="TreeGrafter"/>
</dbReference>
<dbReference type="GO" id="GO:0070043">
    <property type="term" value="F:rRNA (guanine-N7-)-methyltransferase activity"/>
    <property type="evidence" value="ECO:0007669"/>
    <property type="project" value="UniProtKB-UniRule"/>
</dbReference>
<dbReference type="Gene3D" id="3.40.50.150">
    <property type="entry name" value="Vaccinia Virus protein VP39"/>
    <property type="match status" value="1"/>
</dbReference>
<dbReference type="HAMAP" id="MF_00074">
    <property type="entry name" value="16SrRNA_methyltr_G"/>
    <property type="match status" value="1"/>
</dbReference>
<dbReference type="InterPro" id="IPR003682">
    <property type="entry name" value="rRNA_ssu_MeTfrase_G"/>
</dbReference>
<dbReference type="InterPro" id="IPR029063">
    <property type="entry name" value="SAM-dependent_MTases_sf"/>
</dbReference>
<dbReference type="NCBIfam" id="TIGR00138">
    <property type="entry name" value="rsmG_gidB"/>
    <property type="match status" value="1"/>
</dbReference>
<dbReference type="PANTHER" id="PTHR31760">
    <property type="entry name" value="S-ADENOSYL-L-METHIONINE-DEPENDENT METHYLTRANSFERASES SUPERFAMILY PROTEIN"/>
    <property type="match status" value="1"/>
</dbReference>
<dbReference type="PANTHER" id="PTHR31760:SF0">
    <property type="entry name" value="S-ADENOSYL-L-METHIONINE-DEPENDENT METHYLTRANSFERASES SUPERFAMILY PROTEIN"/>
    <property type="match status" value="1"/>
</dbReference>
<dbReference type="Pfam" id="PF02527">
    <property type="entry name" value="GidB"/>
    <property type="match status" value="1"/>
</dbReference>
<dbReference type="PIRSF" id="PIRSF003078">
    <property type="entry name" value="GidB"/>
    <property type="match status" value="1"/>
</dbReference>
<dbReference type="SUPFAM" id="SSF53335">
    <property type="entry name" value="S-adenosyl-L-methionine-dependent methyltransferases"/>
    <property type="match status" value="1"/>
</dbReference>
<proteinExistence type="inferred from homology"/>
<protein>
    <recommendedName>
        <fullName evidence="1">Ribosomal RNA small subunit methyltransferase G</fullName>
        <ecNumber evidence="1">2.1.1.170</ecNumber>
    </recommendedName>
    <alternativeName>
        <fullName evidence="1">16S rRNA 7-methylguanosine methyltransferase</fullName>
        <shortName evidence="1">16S rRNA m7G methyltransferase</shortName>
    </alternativeName>
</protein>
<organism>
    <name type="scientific">Bartonella quintana (strain Toulouse)</name>
    <name type="common">Rochalimaea quintana</name>
    <dbReference type="NCBI Taxonomy" id="283165"/>
    <lineage>
        <taxon>Bacteria</taxon>
        <taxon>Pseudomonadati</taxon>
        <taxon>Pseudomonadota</taxon>
        <taxon>Alphaproteobacteria</taxon>
        <taxon>Hyphomicrobiales</taxon>
        <taxon>Bartonellaceae</taxon>
        <taxon>Bartonella</taxon>
    </lineage>
</organism>
<accession>Q6FYC0</accession>